<keyword id="KW-0012">Acyltransferase</keyword>
<keyword id="KW-0444">Lipid biosynthesis</keyword>
<keyword id="KW-0443">Lipid metabolism</keyword>
<keyword id="KW-0472">Membrane</keyword>
<keyword id="KW-0594">Phospholipid biosynthesis</keyword>
<keyword id="KW-1208">Phospholipid metabolism</keyword>
<keyword id="KW-0808">Transferase</keyword>
<keyword id="KW-0812">Transmembrane</keyword>
<keyword id="KW-1133">Transmembrane helix</keyword>
<dbReference type="EC" id="2.3.1.51" evidence="1"/>
<dbReference type="EMBL" id="DS496130">
    <property type="protein sequence ID" value="EDP02300.1"/>
    <property type="status" value="ALT_SEQ"/>
    <property type="molecule type" value="Genomic_DNA"/>
</dbReference>
<dbReference type="SMR" id="A8J0J0"/>
<dbReference type="EnsemblPlants" id="PNW79030">
    <property type="protein sequence ID" value="PNW79030"/>
    <property type="gene ID" value="CHLRE_09g398289v5"/>
</dbReference>
<dbReference type="Gramene" id="PNW79030">
    <property type="protein sequence ID" value="PNW79030"/>
    <property type="gene ID" value="CHLRE_09g398289v5"/>
</dbReference>
<dbReference type="HOGENOM" id="CLU_1385958_0_0_1"/>
<dbReference type="OrthoDB" id="417078at2759"/>
<dbReference type="BRENDA" id="2.3.1.51">
    <property type="organism ID" value="1318"/>
</dbReference>
<dbReference type="UniPathway" id="UPA00557">
    <property type="reaction ID" value="UER00613"/>
</dbReference>
<dbReference type="GO" id="GO:0016020">
    <property type="term" value="C:membrane"/>
    <property type="evidence" value="ECO:0007669"/>
    <property type="project" value="UniProtKB-SubCell"/>
</dbReference>
<dbReference type="GO" id="GO:0003841">
    <property type="term" value="F:1-acylglycerol-3-phosphate O-acyltransferase activity"/>
    <property type="evidence" value="ECO:0007669"/>
    <property type="project" value="UniProtKB-EC"/>
</dbReference>
<dbReference type="GO" id="GO:0016024">
    <property type="term" value="P:CDP-diacylglycerol biosynthetic process"/>
    <property type="evidence" value="ECO:0007669"/>
    <property type="project" value="UniProtKB-UniPathway"/>
</dbReference>
<dbReference type="CDD" id="cd07989">
    <property type="entry name" value="LPLAT_AGPAT-like"/>
    <property type="match status" value="1"/>
</dbReference>
<dbReference type="InterPro" id="IPR004552">
    <property type="entry name" value="AGP_acyltrans"/>
</dbReference>
<dbReference type="InterPro" id="IPR002123">
    <property type="entry name" value="Plipid/glycerol_acylTrfase"/>
</dbReference>
<dbReference type="NCBIfam" id="TIGR00530">
    <property type="entry name" value="AGP_acyltrn"/>
    <property type="match status" value="1"/>
</dbReference>
<dbReference type="PANTHER" id="PTHR10434">
    <property type="entry name" value="1-ACYL-SN-GLYCEROL-3-PHOSPHATE ACYLTRANSFERASE"/>
    <property type="match status" value="1"/>
</dbReference>
<dbReference type="PANTHER" id="PTHR10434:SF64">
    <property type="entry name" value="1-ACYL-SN-GLYCEROL-3-PHOSPHATE ACYLTRANSFERASE-RELATED"/>
    <property type="match status" value="1"/>
</dbReference>
<dbReference type="Pfam" id="PF01553">
    <property type="entry name" value="Acyltransferase"/>
    <property type="match status" value="1"/>
</dbReference>
<dbReference type="SMART" id="SM00563">
    <property type="entry name" value="PlsC"/>
    <property type="match status" value="1"/>
</dbReference>
<dbReference type="SUPFAM" id="SSF69593">
    <property type="entry name" value="Glycerol-3-phosphate (1)-acyltransferase"/>
    <property type="match status" value="1"/>
</dbReference>
<proteinExistence type="inferred from homology"/>
<feature type="chain" id="PRO_0000438131" description="1-acyl-sn-glycerol-3-phosphate acyltransferase CHLREDRAFT_174358">
    <location>
        <begin position="1"/>
        <end position="332"/>
    </location>
</feature>
<feature type="transmembrane region" description="Helical" evidence="2">
    <location>
        <begin position="96"/>
        <end position="116"/>
    </location>
</feature>
<feature type="transmembrane region" description="Helical" evidence="2">
    <location>
        <begin position="185"/>
        <end position="205"/>
    </location>
</feature>
<feature type="short sequence motif" description="HXXXXD motif" evidence="3">
    <location>
        <begin position="163"/>
        <end position="168"/>
    </location>
</feature>
<feature type="short sequence motif" description="EGTR motif" evidence="3">
    <location>
        <begin position="235"/>
        <end position="238"/>
    </location>
</feature>
<name>LPAT_CHLRE</name>
<reference key="1">
    <citation type="journal article" date="2007" name="Science">
        <title>The Chlamydomonas genome reveals the evolution of key animal and plant functions.</title>
        <authorList>
            <person name="Merchant S.S."/>
            <person name="Prochnik S.E."/>
            <person name="Vallon O."/>
            <person name="Harris E.H."/>
            <person name="Karpowicz S.J."/>
            <person name="Witman G.B."/>
            <person name="Terry A."/>
            <person name="Salamov A."/>
            <person name="Fritz-Laylin L.K."/>
            <person name="Marechal-Drouard L."/>
            <person name="Marshall W.F."/>
            <person name="Qu L.H."/>
            <person name="Nelson D.R."/>
            <person name="Sanderfoot A.A."/>
            <person name="Spalding M.H."/>
            <person name="Kapitonov V.V."/>
            <person name="Ren Q."/>
            <person name="Ferris P."/>
            <person name="Lindquist E."/>
            <person name="Shapiro H."/>
            <person name="Lucas S.M."/>
            <person name="Grimwood J."/>
            <person name="Schmutz J."/>
            <person name="Cardol P."/>
            <person name="Cerutti H."/>
            <person name="Chanfreau G."/>
            <person name="Chen C.L."/>
            <person name="Cognat V."/>
            <person name="Croft M.T."/>
            <person name="Dent R."/>
            <person name="Dutcher S."/>
            <person name="Fernandez E."/>
            <person name="Fukuzawa H."/>
            <person name="Gonzalez-Ballester D."/>
            <person name="Gonzalez-Halphen D."/>
            <person name="Hallmann A."/>
            <person name="Hanikenne M."/>
            <person name="Hippler M."/>
            <person name="Inwood W."/>
            <person name="Jabbari K."/>
            <person name="Kalanon M."/>
            <person name="Kuras R."/>
            <person name="Lefebvre P.A."/>
            <person name="Lemaire S.D."/>
            <person name="Lobanov A.V."/>
            <person name="Lohr M."/>
            <person name="Manuell A."/>
            <person name="Meier I."/>
            <person name="Mets L."/>
            <person name="Mittag M."/>
            <person name="Mittelmeier T."/>
            <person name="Moroney J.V."/>
            <person name="Moseley J."/>
            <person name="Napoli C."/>
            <person name="Nedelcu A.M."/>
            <person name="Niyogi K."/>
            <person name="Novoselov S.V."/>
            <person name="Paulsen I.T."/>
            <person name="Pazour G.J."/>
            <person name="Purton S."/>
            <person name="Ral J.P."/>
            <person name="Riano-Pachon D.M."/>
            <person name="Riekhof W."/>
            <person name="Rymarquis L."/>
            <person name="Schroda M."/>
            <person name="Stern D."/>
            <person name="Umen J."/>
            <person name="Willows R."/>
            <person name="Wilson N."/>
            <person name="Zimmer S.L."/>
            <person name="Allmer J."/>
            <person name="Balk J."/>
            <person name="Bisova K."/>
            <person name="Chen C.J."/>
            <person name="Elias M."/>
            <person name="Gendler K."/>
            <person name="Hauser C."/>
            <person name="Lamb M.R."/>
            <person name="Ledford H."/>
            <person name="Long J.C."/>
            <person name="Minagawa J."/>
            <person name="Page M.D."/>
            <person name="Pan J."/>
            <person name="Pootakham W."/>
            <person name="Roje S."/>
            <person name="Rose A."/>
            <person name="Stahlberg E."/>
            <person name="Terauchi A.M."/>
            <person name="Yang P."/>
            <person name="Ball S."/>
            <person name="Bowler C."/>
            <person name="Dieckmann C.L."/>
            <person name="Gladyshev V.N."/>
            <person name="Green P."/>
            <person name="Jorgensen R."/>
            <person name="Mayfield S."/>
            <person name="Mueller-Roeber B."/>
            <person name="Rajamani S."/>
            <person name="Sayre R.T."/>
            <person name="Brokstein P."/>
            <person name="Dubchak I."/>
            <person name="Goodstein D."/>
            <person name="Hornick L."/>
            <person name="Huang Y.W."/>
            <person name="Jhaveri J."/>
            <person name="Luo Y."/>
            <person name="Martinez D."/>
            <person name="Ngau W.C."/>
            <person name="Otillar B."/>
            <person name="Poliakov A."/>
            <person name="Porter A."/>
            <person name="Szajkowski L."/>
            <person name="Werner G."/>
            <person name="Zhou K."/>
            <person name="Grigoriev I.V."/>
            <person name="Rokhsar D.S."/>
            <person name="Grossman A.R."/>
        </authorList>
    </citation>
    <scope>NUCLEOTIDE SEQUENCE [LARGE SCALE GENOMIC DNA]</scope>
    <source>
        <strain>CC-503</strain>
        <strain>cw92</strain>
    </source>
</reference>
<accession>A8J0J0</accession>
<sequence length="332" mass="36241">MARKSSLAQAAIERKPVLLRPQLNVPRMSGITALPMERRPLPVAPSPSAKPELPARSALVCHAAAASVPLPNSDSAPQPNVLLAKIRAIMFFAWSFLLSLPLFVTMMVMAPLVLAFDKYRRLAQHFVNNLWACASTAPFYKVTIIGRENLPPPDKPVVYVANHQSFLDIYSLFHLQRPFKFISKTSNFLIPIIGWSMFLTGHVMINRVDRRSQLKCLQQCRDLLAEGAPVLFFPEGTRSLDCKMAGFKKGAFSVAAKAGVEVVPITLLGTGSLMPSGKESQLRPGQVTIVVHKALPPNKNADQLCDAARQAVASSLPPELVGSATEMAPDEQ</sequence>
<gene>
    <name evidence="4" type="ORF">CHLREDRAFT_174358</name>
</gene>
<organism>
    <name type="scientific">Chlamydomonas reinhardtii</name>
    <name type="common">Chlamydomonas smithii</name>
    <dbReference type="NCBI Taxonomy" id="3055"/>
    <lineage>
        <taxon>Eukaryota</taxon>
        <taxon>Viridiplantae</taxon>
        <taxon>Chlorophyta</taxon>
        <taxon>core chlorophytes</taxon>
        <taxon>Chlorophyceae</taxon>
        <taxon>CS clade</taxon>
        <taxon>Chlamydomonadales</taxon>
        <taxon>Chlamydomonadaceae</taxon>
        <taxon>Chlamydomonas</taxon>
    </lineage>
</organism>
<comment type="function">
    <text evidence="1">Converts lysophosphatidic acid (LPA) into phosphatidic acid by incorporating an acyl moiety at the sn-2 position of the glycerol backbone.</text>
</comment>
<comment type="catalytic activity">
    <reaction evidence="1">
        <text>a 1-acyl-sn-glycero-3-phosphate + an acyl-CoA = a 1,2-diacyl-sn-glycero-3-phosphate + CoA</text>
        <dbReference type="Rhea" id="RHEA:19709"/>
        <dbReference type="ChEBI" id="CHEBI:57287"/>
        <dbReference type="ChEBI" id="CHEBI:57970"/>
        <dbReference type="ChEBI" id="CHEBI:58342"/>
        <dbReference type="ChEBI" id="CHEBI:58608"/>
        <dbReference type="EC" id="2.3.1.51"/>
    </reaction>
</comment>
<comment type="pathway">
    <text evidence="1">Phospholipid metabolism; CDP-diacylglycerol biosynthesis; CDP-diacylglycerol from sn-glycerol 3-phosphate: step 2/3.</text>
</comment>
<comment type="subcellular location">
    <subcellularLocation>
        <location evidence="2">Membrane</location>
        <topology evidence="2">Multi-pass membrane protein</topology>
    </subcellularLocation>
</comment>
<comment type="domain">
    <text evidence="3">The HXXXXD motif is essential for acyltransferase activity and may constitute the binding site for the phosphate moiety of the glycerol-3-phosphate.</text>
</comment>
<comment type="similarity">
    <text evidence="3">Belongs to the 1-acyl-sn-glycerol-3-phosphate acyltransferase family.</text>
</comment>
<comment type="sequence caution" evidence="3">
    <conflict type="erroneous gene model prediction">
        <sequence resource="EMBL-CDS" id="EDP02300"/>
    </conflict>
</comment>
<protein>
    <recommendedName>
        <fullName>1-acyl-sn-glycerol-3-phosphate acyltransferase CHLREDRAFT_174358</fullName>
        <ecNumber evidence="1">2.3.1.51</ecNumber>
    </recommendedName>
</protein>
<evidence type="ECO:0000250" key="1">
    <source>
        <dbReference type="UniProtKB" id="Q8K3K7"/>
    </source>
</evidence>
<evidence type="ECO:0000255" key="2"/>
<evidence type="ECO:0000305" key="3"/>
<evidence type="ECO:0000312" key="4">
    <source>
        <dbReference type="EMBL" id="EDP02300.1"/>
    </source>
</evidence>